<keyword id="KW-0025">Alternative splicing</keyword>
<keyword id="KW-0276">Fatty acid metabolism</keyword>
<keyword id="KW-0436">Ligase</keyword>
<keyword id="KW-0443">Lipid metabolism</keyword>
<keyword id="KW-1185">Reference proteome</keyword>
<name>AEE10_ARATH</name>
<comment type="function">
    <text evidence="1">May act as an acid--thiol ligase that activates carboxylic acids by forming acyl-CoAs.</text>
</comment>
<comment type="alternative products">
    <event type="alternative splicing"/>
    <isoform>
        <id>Q9LPK7-1</id>
        <name>1</name>
        <sequence type="displayed"/>
    </isoform>
    <isoform>
        <id>Q9LPK7-2</id>
        <name>2</name>
        <sequence type="described" ref="VSP_042324"/>
    </isoform>
</comment>
<comment type="tissue specificity">
    <text evidence="2">Expressed at low levels in roots.</text>
</comment>
<comment type="similarity">
    <text evidence="4">Belongs to the ATP-dependent AMP-binding enzyme family.</text>
</comment>
<comment type="sequence caution" evidence="4">
    <conflict type="erroneous termination">
        <sequence resource="EMBL-CDS" id="ABK28406"/>
    </conflict>
    <text>Extended C-terminus.</text>
</comment>
<reference key="1">
    <citation type="journal article" date="2002" name="Plant Physiol.">
        <title>Arabidopsis contains nine long-chain acyl-coenzyme A synthetase genes that participate in fatty acid and glycerolipid metabolism.</title>
        <authorList>
            <person name="Shockey J.M."/>
            <person name="Fulda M.S."/>
            <person name="Browse J.A."/>
        </authorList>
    </citation>
    <scope>NUCLEOTIDE SEQUENCE [MRNA] (ISOFORM 2)</scope>
</reference>
<reference key="2">
    <citation type="journal article" date="2000" name="Nature">
        <title>Sequence and analysis of chromosome 1 of the plant Arabidopsis thaliana.</title>
        <authorList>
            <person name="Theologis A."/>
            <person name="Ecker J.R."/>
            <person name="Palm C.J."/>
            <person name="Federspiel N.A."/>
            <person name="Kaul S."/>
            <person name="White O."/>
            <person name="Alonso J."/>
            <person name="Altafi H."/>
            <person name="Araujo R."/>
            <person name="Bowman C.L."/>
            <person name="Brooks S.Y."/>
            <person name="Buehler E."/>
            <person name="Chan A."/>
            <person name="Chao Q."/>
            <person name="Chen H."/>
            <person name="Cheuk R.F."/>
            <person name="Chin C.W."/>
            <person name="Chung M.K."/>
            <person name="Conn L."/>
            <person name="Conway A.B."/>
            <person name="Conway A.R."/>
            <person name="Creasy T.H."/>
            <person name="Dewar K."/>
            <person name="Dunn P."/>
            <person name="Etgu P."/>
            <person name="Feldblyum T.V."/>
            <person name="Feng J.-D."/>
            <person name="Fong B."/>
            <person name="Fujii C.Y."/>
            <person name="Gill J.E."/>
            <person name="Goldsmith A.D."/>
            <person name="Haas B."/>
            <person name="Hansen N.F."/>
            <person name="Hughes B."/>
            <person name="Huizar L."/>
            <person name="Hunter J.L."/>
            <person name="Jenkins J."/>
            <person name="Johnson-Hopson C."/>
            <person name="Khan S."/>
            <person name="Khaykin E."/>
            <person name="Kim C.J."/>
            <person name="Koo H.L."/>
            <person name="Kremenetskaia I."/>
            <person name="Kurtz D.B."/>
            <person name="Kwan A."/>
            <person name="Lam B."/>
            <person name="Langin-Hooper S."/>
            <person name="Lee A."/>
            <person name="Lee J.M."/>
            <person name="Lenz C.A."/>
            <person name="Li J.H."/>
            <person name="Li Y.-P."/>
            <person name="Lin X."/>
            <person name="Liu S.X."/>
            <person name="Liu Z.A."/>
            <person name="Luros J.S."/>
            <person name="Maiti R."/>
            <person name="Marziali A."/>
            <person name="Militscher J."/>
            <person name="Miranda M."/>
            <person name="Nguyen M."/>
            <person name="Nierman W.C."/>
            <person name="Osborne B.I."/>
            <person name="Pai G."/>
            <person name="Peterson J."/>
            <person name="Pham P.K."/>
            <person name="Rizzo M."/>
            <person name="Rooney T."/>
            <person name="Rowley D."/>
            <person name="Sakano H."/>
            <person name="Salzberg S.L."/>
            <person name="Schwartz J.R."/>
            <person name="Shinn P."/>
            <person name="Southwick A.M."/>
            <person name="Sun H."/>
            <person name="Tallon L.J."/>
            <person name="Tambunga G."/>
            <person name="Toriumi M.J."/>
            <person name="Town C.D."/>
            <person name="Utterback T."/>
            <person name="Van Aken S."/>
            <person name="Vaysberg M."/>
            <person name="Vysotskaia V.S."/>
            <person name="Walker M."/>
            <person name="Wu D."/>
            <person name="Yu G."/>
            <person name="Fraser C.M."/>
            <person name="Venter J.C."/>
            <person name="Davis R.W."/>
        </authorList>
    </citation>
    <scope>NUCLEOTIDE SEQUENCE [LARGE SCALE GENOMIC DNA]</scope>
    <source>
        <strain>cv. Columbia</strain>
    </source>
</reference>
<reference key="3">
    <citation type="journal article" date="2017" name="Plant J.">
        <title>Araport11: a complete reannotation of the Arabidopsis thaliana reference genome.</title>
        <authorList>
            <person name="Cheng C.Y."/>
            <person name="Krishnakumar V."/>
            <person name="Chan A.P."/>
            <person name="Thibaud-Nissen F."/>
            <person name="Schobel S."/>
            <person name="Town C.D."/>
        </authorList>
    </citation>
    <scope>GENOME REANNOTATION</scope>
    <source>
        <strain>cv. Columbia</strain>
    </source>
</reference>
<reference key="4">
    <citation type="journal article" date="2006" name="Plant Biotechnol. J.">
        <title>Simultaneous high-throughput recombinational cloning of open reading frames in closed and open configurations.</title>
        <authorList>
            <person name="Underwood B.A."/>
            <person name="Vanderhaeghen R."/>
            <person name="Whitford R."/>
            <person name="Town C.D."/>
            <person name="Hilson P."/>
        </authorList>
    </citation>
    <scope>NUCLEOTIDE SEQUENCE [LARGE SCALE MRNA] (ISOFORM 1)</scope>
    <source>
        <strain>cv. Columbia</strain>
    </source>
</reference>
<reference key="5">
    <citation type="journal article" date="2003" name="Plant Physiol.">
        <title>Arabidopsis contains a large superfamily of acyl-activating enzymes. Phylogenetic and biochemical analysis reveals a new class of acyl-coenzyme a synthetases.</title>
        <authorList>
            <person name="Shockey J.M."/>
            <person name="Fulda M.S."/>
            <person name="Browse J."/>
        </authorList>
    </citation>
    <scope>TISSUE SPECIFICITY</scope>
    <scope>GENE FAMILY</scope>
    <scope>NOMENCLATURE</scope>
</reference>
<dbReference type="EC" id="6.2.1.-"/>
<dbReference type="EMBL" id="AF503769">
    <property type="protein sequence ID" value="AAM28627.1"/>
    <property type="molecule type" value="mRNA"/>
</dbReference>
<dbReference type="EMBL" id="AC015447">
    <property type="protein sequence ID" value="AAF87901.1"/>
    <property type="molecule type" value="Genomic_DNA"/>
</dbReference>
<dbReference type="EMBL" id="CP002684">
    <property type="protein sequence ID" value="AEE30113.1"/>
    <property type="molecule type" value="Genomic_DNA"/>
</dbReference>
<dbReference type="EMBL" id="CP002684">
    <property type="protein sequence ID" value="AEE30114.1"/>
    <property type="molecule type" value="Genomic_DNA"/>
</dbReference>
<dbReference type="EMBL" id="DQ446270">
    <property type="protein sequence ID" value="ABE65638.1"/>
    <property type="molecule type" value="mRNA"/>
</dbReference>
<dbReference type="EMBL" id="DQ652849">
    <property type="protein sequence ID" value="ABK28406.1"/>
    <property type="status" value="ALT_SEQ"/>
    <property type="molecule type" value="mRNA"/>
</dbReference>
<dbReference type="PIR" id="B86348">
    <property type="entry name" value="B86348"/>
</dbReference>
<dbReference type="RefSeq" id="NP_001077573.1">
    <molecule id="Q9LPK7-1"/>
    <property type="nucleotide sequence ID" value="NM_001084104.2"/>
</dbReference>
<dbReference type="RefSeq" id="NP_173572.2">
    <molecule id="Q9LPK7-2"/>
    <property type="nucleotide sequence ID" value="NM_102002.2"/>
</dbReference>
<dbReference type="SMR" id="Q9LPK7"/>
<dbReference type="FunCoup" id="Q9LPK7">
    <property type="interactions" value="108"/>
</dbReference>
<dbReference type="STRING" id="3702.Q9LPK7"/>
<dbReference type="PaxDb" id="3702-AT1G21530.2"/>
<dbReference type="ProteomicsDB" id="244818">
    <molecule id="Q9LPK7-1"/>
</dbReference>
<dbReference type="EnsemblPlants" id="AT1G21530.1">
    <molecule id="Q9LPK7-2"/>
    <property type="protein sequence ID" value="AT1G21530.1"/>
    <property type="gene ID" value="AT1G21530"/>
</dbReference>
<dbReference type="EnsemblPlants" id="AT1G21530.2">
    <molecule id="Q9LPK7-1"/>
    <property type="protein sequence ID" value="AT1G21530.2"/>
    <property type="gene ID" value="AT1G21530"/>
</dbReference>
<dbReference type="GeneID" id="838754"/>
<dbReference type="Gramene" id="AT1G21530.1">
    <molecule id="Q9LPK7-2"/>
    <property type="protein sequence ID" value="AT1G21530.1"/>
    <property type="gene ID" value="AT1G21530"/>
</dbReference>
<dbReference type="Gramene" id="AT1G21530.2">
    <molecule id="Q9LPK7-1"/>
    <property type="protein sequence ID" value="AT1G21530.2"/>
    <property type="gene ID" value="AT1G21530"/>
</dbReference>
<dbReference type="KEGG" id="ath:AT1G21530"/>
<dbReference type="Araport" id="AT1G21530"/>
<dbReference type="TAIR" id="AT1G21530"/>
<dbReference type="eggNOG" id="KOG1176">
    <property type="taxonomic scope" value="Eukaryota"/>
</dbReference>
<dbReference type="HOGENOM" id="CLU_000022_59_5_1"/>
<dbReference type="InParanoid" id="Q9LPK7"/>
<dbReference type="OMA" id="RPVQIMT"/>
<dbReference type="PhylomeDB" id="Q9LPK7"/>
<dbReference type="BioCyc" id="ARA:AT1G21530-MONOMER"/>
<dbReference type="PRO" id="PR:Q9LPK7"/>
<dbReference type="Proteomes" id="UP000006548">
    <property type="component" value="Chromosome 1"/>
</dbReference>
<dbReference type="ExpressionAtlas" id="Q9LPK7">
    <property type="expression patterns" value="baseline and differential"/>
</dbReference>
<dbReference type="GO" id="GO:0016874">
    <property type="term" value="F:ligase activity"/>
    <property type="evidence" value="ECO:0007669"/>
    <property type="project" value="UniProtKB-KW"/>
</dbReference>
<dbReference type="GO" id="GO:0006631">
    <property type="term" value="P:fatty acid metabolic process"/>
    <property type="evidence" value="ECO:0007669"/>
    <property type="project" value="UniProtKB-KW"/>
</dbReference>
<dbReference type="CDD" id="cd12118">
    <property type="entry name" value="ttLC_FACS_AEE21_like"/>
    <property type="match status" value="1"/>
</dbReference>
<dbReference type="FunFam" id="3.30.300.30:FF:000008">
    <property type="entry name" value="2,3-dihydroxybenzoate-AMP ligase"/>
    <property type="match status" value="1"/>
</dbReference>
<dbReference type="FunFam" id="3.40.50.12780:FF:000003">
    <property type="entry name" value="Long-chain-fatty-acid--CoA ligase FadD"/>
    <property type="match status" value="1"/>
</dbReference>
<dbReference type="Gene3D" id="3.30.300.30">
    <property type="match status" value="1"/>
</dbReference>
<dbReference type="Gene3D" id="3.40.50.12780">
    <property type="entry name" value="N-terminal domain of ligase-like"/>
    <property type="match status" value="1"/>
</dbReference>
<dbReference type="InterPro" id="IPR025110">
    <property type="entry name" value="AMP-bd_C"/>
</dbReference>
<dbReference type="InterPro" id="IPR045851">
    <property type="entry name" value="AMP-bd_C_sf"/>
</dbReference>
<dbReference type="InterPro" id="IPR020845">
    <property type="entry name" value="AMP-binding_CS"/>
</dbReference>
<dbReference type="InterPro" id="IPR000873">
    <property type="entry name" value="AMP-dep_synth/lig_dom"/>
</dbReference>
<dbReference type="InterPro" id="IPR042099">
    <property type="entry name" value="ANL_N_sf"/>
</dbReference>
<dbReference type="PANTHER" id="PTHR43859">
    <property type="entry name" value="ACYL-ACTIVATING ENZYME"/>
    <property type="match status" value="1"/>
</dbReference>
<dbReference type="PANTHER" id="PTHR43859:SF28">
    <property type="entry name" value="ACYL-ACTIVATING ENZYME 10-RELATED"/>
    <property type="match status" value="1"/>
</dbReference>
<dbReference type="Pfam" id="PF00501">
    <property type="entry name" value="AMP-binding"/>
    <property type="match status" value="1"/>
</dbReference>
<dbReference type="Pfam" id="PF13193">
    <property type="entry name" value="AMP-binding_C"/>
    <property type="match status" value="1"/>
</dbReference>
<dbReference type="SUPFAM" id="SSF56801">
    <property type="entry name" value="Acetyl-CoA synthetase-like"/>
    <property type="match status" value="1"/>
</dbReference>
<dbReference type="PROSITE" id="PS00455">
    <property type="entry name" value="AMP_BINDING"/>
    <property type="match status" value="1"/>
</dbReference>
<protein>
    <recommendedName>
        <fullName>Probable acyl-activating enzyme 10</fullName>
        <ecNumber>6.2.1.-</ecNumber>
    </recommendedName>
    <alternativeName>
        <fullName>AMP-binding protein 10</fullName>
        <shortName>AtAMPBP10</shortName>
    </alternativeName>
</protein>
<evidence type="ECO:0000250" key="1"/>
<evidence type="ECO:0000269" key="2">
    <source>
    </source>
</evidence>
<evidence type="ECO:0000303" key="3">
    <source>
    </source>
</evidence>
<evidence type="ECO:0000305" key="4"/>
<organism>
    <name type="scientific">Arabidopsis thaliana</name>
    <name type="common">Mouse-ear cress</name>
    <dbReference type="NCBI Taxonomy" id="3702"/>
    <lineage>
        <taxon>Eukaryota</taxon>
        <taxon>Viridiplantae</taxon>
        <taxon>Streptophyta</taxon>
        <taxon>Embryophyta</taxon>
        <taxon>Tracheophyta</taxon>
        <taxon>Spermatophyta</taxon>
        <taxon>Magnoliopsida</taxon>
        <taxon>eudicotyledons</taxon>
        <taxon>Gunneridae</taxon>
        <taxon>Pentapetalae</taxon>
        <taxon>rosids</taxon>
        <taxon>malvids</taxon>
        <taxon>Brassicales</taxon>
        <taxon>Brassicaceae</taxon>
        <taxon>Camelineae</taxon>
        <taxon>Arabidopsis</taxon>
    </lineage>
</organism>
<sequence>MELLLPHPSNSTPLTVLGFLDRAASVYGDCPSILHTANTVHTWSETHNRCLRIASALTSSSIGIKQGQVVSVVGPNVPSVYELQFAVPMSGAILNNINPRLDAHALSVLLRHSESRLVFVDHRSISLVLEAVSLFTQHEKPHLVLLDDDQENDSSSASDFLDTYEEIMERGNSRFKWIRPQTEWQPMVLNYTSGTTSSPKGVVLSHRAIFMLTVSSLLDWSVPNRPVYLWTLPMFHANGWGYTWGTAAVGATNICTRRVDAPTIYNLIDKHNVTHMCAAPMVLNMLINYPLSTPLKNPVQVMTSGAPPPATIISRAESLGFNVSHSYGLTETSGPVVSCAWKPKWDHLDPLERARLKSRQGVRTLGFTEVDVRDRKTGKSVKHDGVSVGEIVFRGSSVMLGYYKDPQGTAACMREDGWFYSGDIGVIHKDGYLEIKDRSKDVIICGGENISSAEIETVLYTNPVVKEAAVVAKPDKMWGETPCAFVSLKCDNNGDGSVPVTEREIREFCKTKLPKYMVPRKVIFQEELPKTSTGKIQKFLLRQMAKTLS</sequence>
<proteinExistence type="evidence at transcript level"/>
<accession>Q9LPK7</accession>
<accession>A0ME81</accession>
<accession>Q8LRT3</accession>
<feature type="chain" id="PRO_0000415721" description="Probable acyl-activating enzyme 10">
    <location>
        <begin position="1"/>
        <end position="549"/>
    </location>
</feature>
<feature type="splice variant" id="VSP_042324" description="In isoform 2." evidence="3">
    <location>
        <begin position="299"/>
        <end position="300"/>
    </location>
</feature>
<feature type="sequence conflict" description="In Ref. 4; ABK28406." evidence="4" ref="4">
    <original>S</original>
    <variation>L</variation>
    <location>
        <position position="387"/>
    </location>
</feature>
<gene>
    <name type="primary">AEE10</name>
    <name type="synonym">AMPBP10</name>
    <name type="ordered locus">At1g21530</name>
    <name type="ORF">F24J8.13</name>
</gene>